<keyword id="KW-0963">Cytoplasm</keyword>
<keyword id="KW-0592">Phosphate transport</keyword>
<keyword id="KW-1185">Reference proteome</keyword>
<keyword id="KW-0813">Transport</keyword>
<comment type="function">
    <text evidence="1">Plays a role in the regulation of phosphate uptake.</text>
</comment>
<comment type="subunit">
    <text evidence="1">Homodimer.</text>
</comment>
<comment type="subcellular location">
    <subcellularLocation>
        <location evidence="1">Cytoplasm</location>
    </subcellularLocation>
</comment>
<comment type="similarity">
    <text evidence="2">Belongs to the PhoU family.</text>
</comment>
<sequence>MKKASEIGHTVKAFDEDLGGLRALICEMGGLTEIALTSTLEALIHSNKELAAQIVEKDKEIDALEIEAERVAMRIISLRAPLADDLRDVIAAMKISGILERMADYAKNIAKRVPILQNMVSIHPVPVLPVMGEMVSEMVRNVLDAYAARDPKKALHVAEYDMEVDGLYNNLFRILLTYMMEDSGRISTCIHLMFIAKNLERIGDHATNIAEMVYFAATGKQMPERTRGKDLLASEGS</sequence>
<protein>
    <recommendedName>
        <fullName>Phosphate-specific transport system accessory protein PhoU homolog</fullName>
        <shortName>Pst system accessory protein PhoU homolog</shortName>
    </recommendedName>
</protein>
<accession>Q9X5E1</accession>
<accession>Q5NNC3</accession>
<feature type="chain" id="PRO_0000155186" description="Phosphate-specific transport system accessory protein PhoU homolog">
    <location>
        <begin position="1"/>
        <end position="237"/>
    </location>
</feature>
<organism>
    <name type="scientific">Zymomonas mobilis subsp. mobilis (strain ATCC 31821 / ZM4 / CP4)</name>
    <dbReference type="NCBI Taxonomy" id="264203"/>
    <lineage>
        <taxon>Bacteria</taxon>
        <taxon>Pseudomonadati</taxon>
        <taxon>Pseudomonadota</taxon>
        <taxon>Alphaproteobacteria</taxon>
        <taxon>Sphingomonadales</taxon>
        <taxon>Zymomonadaceae</taxon>
        <taxon>Zymomonas</taxon>
    </lineage>
</organism>
<dbReference type="EMBL" id="AF124757">
    <property type="protein sequence ID" value="AAD29648.1"/>
    <property type="molecule type" value="Genomic_DNA"/>
</dbReference>
<dbReference type="EMBL" id="AE008692">
    <property type="protein sequence ID" value="AAV89787.1"/>
    <property type="molecule type" value="Genomic_DNA"/>
</dbReference>
<dbReference type="RefSeq" id="WP_011240988.1">
    <property type="nucleotide sequence ID" value="NZ_CP035711.1"/>
</dbReference>
<dbReference type="SMR" id="Q9X5E1"/>
<dbReference type="STRING" id="264203.ZMO1163"/>
<dbReference type="GeneID" id="79903713"/>
<dbReference type="KEGG" id="zmo:ZMO1163"/>
<dbReference type="eggNOG" id="COG0704">
    <property type="taxonomic scope" value="Bacteria"/>
</dbReference>
<dbReference type="HOGENOM" id="CLU_078518_2_1_5"/>
<dbReference type="Proteomes" id="UP000001173">
    <property type="component" value="Chromosome"/>
</dbReference>
<dbReference type="GO" id="GO:0005737">
    <property type="term" value="C:cytoplasm"/>
    <property type="evidence" value="ECO:0000250"/>
    <property type="project" value="UniProtKB"/>
</dbReference>
<dbReference type="GO" id="GO:0042803">
    <property type="term" value="F:protein homodimerization activity"/>
    <property type="evidence" value="ECO:0000250"/>
    <property type="project" value="UniProtKB"/>
</dbReference>
<dbReference type="GO" id="GO:0030643">
    <property type="term" value="P:intracellular phosphate ion homeostasis"/>
    <property type="evidence" value="ECO:0007669"/>
    <property type="project" value="InterPro"/>
</dbReference>
<dbReference type="GO" id="GO:0045936">
    <property type="term" value="P:negative regulation of phosphate metabolic process"/>
    <property type="evidence" value="ECO:0000250"/>
    <property type="project" value="UniProtKB"/>
</dbReference>
<dbReference type="GO" id="GO:2000186">
    <property type="term" value="P:negative regulation of phosphate transmembrane transport"/>
    <property type="evidence" value="ECO:0000250"/>
    <property type="project" value="UniProtKB"/>
</dbReference>
<dbReference type="GO" id="GO:0006817">
    <property type="term" value="P:phosphate ion transport"/>
    <property type="evidence" value="ECO:0007669"/>
    <property type="project" value="UniProtKB-KW"/>
</dbReference>
<dbReference type="FunFam" id="1.20.58.220:FF:000004">
    <property type="entry name" value="Phosphate-specific transport system accessory protein PhoU"/>
    <property type="match status" value="1"/>
</dbReference>
<dbReference type="Gene3D" id="1.20.58.220">
    <property type="entry name" value="Phosphate transport system protein phou homolog 2, domain 2"/>
    <property type="match status" value="1"/>
</dbReference>
<dbReference type="InterPro" id="IPR028366">
    <property type="entry name" value="P_transport_PhoU"/>
</dbReference>
<dbReference type="InterPro" id="IPR038078">
    <property type="entry name" value="PhoU-like_sf"/>
</dbReference>
<dbReference type="InterPro" id="IPR026022">
    <property type="entry name" value="PhoU_dom"/>
</dbReference>
<dbReference type="NCBIfam" id="TIGR02135">
    <property type="entry name" value="phoU_full"/>
    <property type="match status" value="1"/>
</dbReference>
<dbReference type="PANTHER" id="PTHR42930">
    <property type="entry name" value="PHOSPHATE-SPECIFIC TRANSPORT SYSTEM ACCESSORY PROTEIN PHOU"/>
    <property type="match status" value="1"/>
</dbReference>
<dbReference type="PANTHER" id="PTHR42930:SF3">
    <property type="entry name" value="PHOSPHATE-SPECIFIC TRANSPORT SYSTEM ACCESSORY PROTEIN PHOU"/>
    <property type="match status" value="1"/>
</dbReference>
<dbReference type="Pfam" id="PF01895">
    <property type="entry name" value="PhoU"/>
    <property type="match status" value="2"/>
</dbReference>
<dbReference type="PIRSF" id="PIRSF003107">
    <property type="entry name" value="PhoU"/>
    <property type="match status" value="1"/>
</dbReference>
<dbReference type="SUPFAM" id="SSF109755">
    <property type="entry name" value="PhoU-like"/>
    <property type="match status" value="1"/>
</dbReference>
<name>PHOU_ZYMMO</name>
<gene>
    <name type="primary">phoU</name>
    <name type="ordered locus">ZMO1163</name>
</gene>
<proteinExistence type="inferred from homology"/>
<evidence type="ECO:0000250" key="1"/>
<evidence type="ECO:0000305" key="2"/>
<reference key="1">
    <citation type="submission" date="1999-01" db="EMBL/GenBank/DDBJ databases">
        <authorList>
            <person name="Lee H.J."/>
            <person name="Kang H.S."/>
        </authorList>
    </citation>
    <scope>NUCLEOTIDE SEQUENCE [GENOMIC DNA]</scope>
    <source>
        <strain>ATCC 31821 / ZM4 / CP4</strain>
    </source>
</reference>
<reference key="2">
    <citation type="journal article" date="2005" name="Nat. Biotechnol.">
        <title>The genome sequence of the ethanologenic bacterium Zymomonas mobilis ZM4.</title>
        <authorList>
            <person name="Seo J.-S."/>
            <person name="Chong H."/>
            <person name="Park H.S."/>
            <person name="Yoon K.-O."/>
            <person name="Jung C."/>
            <person name="Kim J.J."/>
            <person name="Hong J.H."/>
            <person name="Kim H."/>
            <person name="Kim J.-H."/>
            <person name="Kil J.-I."/>
            <person name="Park C.J."/>
            <person name="Oh H.-M."/>
            <person name="Lee J.-S."/>
            <person name="Jin S.-J."/>
            <person name="Um H.-W."/>
            <person name="Lee H.-J."/>
            <person name="Oh S.-J."/>
            <person name="Kim J.Y."/>
            <person name="Kang H.L."/>
            <person name="Lee S.Y."/>
            <person name="Lee K.J."/>
            <person name="Kang H.S."/>
        </authorList>
    </citation>
    <scope>NUCLEOTIDE SEQUENCE [LARGE SCALE GENOMIC DNA]</scope>
    <source>
        <strain>ATCC 31821 / ZM4 / CP4</strain>
    </source>
</reference>